<evidence type="ECO:0000255" key="1">
    <source>
        <dbReference type="HAMAP-Rule" id="MF_00581"/>
    </source>
</evidence>
<sequence>MTTILENLPAGQKVGIAFSGGLDTSAALHWMRIKGAVPYAYTANLGQPDEDDYDAIPKRAIQYGAEGARLIDCRAQLVAEGIAALQCGAFHISTAGVTYFNTTPIGRAVTGTMLVAAMKEDGVNIWGDGSTYKGNDIERFYRYGLLVNPDLKIYKPWLDQQFIDELGGRAEMSEFMRQAGFEYKMSAEKAYSTDSNLLGATHEAKDLESLESGIKIVNPIMGVAFWRDDVKIDKEEVTIRFEEGRPVALNGVEYKDAVALLLEANRIGGRHGLGMSDQIENRIIEAKSRGIYEAPGLALLYIAYERLVTGIHNEDTIEQYRENGRRLGRLLYQGRWFDPQAIMLRETAQRWVARAVTGEVTVELRRGNDYSIIGTRSPNLTYQPERLSMEKVQSMFSPRDRIGQLTMRNLDITDTRDKLRIYSQVGLLAAGESSALPKLKEDESGN</sequence>
<proteinExistence type="inferred from homology"/>
<accession>Q62EQ4</accession>
<dbReference type="EC" id="6.3.4.5" evidence="1"/>
<dbReference type="EMBL" id="CP000010">
    <property type="protein sequence ID" value="AAU48606.1"/>
    <property type="molecule type" value="Genomic_DNA"/>
</dbReference>
<dbReference type="RefSeq" id="WP_004189990.1">
    <property type="nucleotide sequence ID" value="NC_006348.1"/>
</dbReference>
<dbReference type="RefSeq" id="YP_104824.1">
    <property type="nucleotide sequence ID" value="NC_006348.1"/>
</dbReference>
<dbReference type="SMR" id="Q62EQ4"/>
<dbReference type="GeneID" id="93058813"/>
<dbReference type="KEGG" id="bma:BMA3363"/>
<dbReference type="PATRIC" id="fig|243160.12.peg.3448"/>
<dbReference type="eggNOG" id="COG0137">
    <property type="taxonomic scope" value="Bacteria"/>
</dbReference>
<dbReference type="HOGENOM" id="CLU_032784_4_1_4"/>
<dbReference type="UniPathway" id="UPA00068">
    <property type="reaction ID" value="UER00113"/>
</dbReference>
<dbReference type="Proteomes" id="UP000006693">
    <property type="component" value="Chromosome 1"/>
</dbReference>
<dbReference type="GO" id="GO:0005737">
    <property type="term" value="C:cytoplasm"/>
    <property type="evidence" value="ECO:0007669"/>
    <property type="project" value="UniProtKB-SubCell"/>
</dbReference>
<dbReference type="GO" id="GO:0004055">
    <property type="term" value="F:argininosuccinate synthase activity"/>
    <property type="evidence" value="ECO:0007669"/>
    <property type="project" value="UniProtKB-UniRule"/>
</dbReference>
<dbReference type="GO" id="GO:0005524">
    <property type="term" value="F:ATP binding"/>
    <property type="evidence" value="ECO:0007669"/>
    <property type="project" value="UniProtKB-UniRule"/>
</dbReference>
<dbReference type="GO" id="GO:0042803">
    <property type="term" value="F:protein homodimerization activity"/>
    <property type="evidence" value="ECO:0007669"/>
    <property type="project" value="InterPro"/>
</dbReference>
<dbReference type="GO" id="GO:0000053">
    <property type="term" value="P:argininosuccinate metabolic process"/>
    <property type="evidence" value="ECO:0007669"/>
    <property type="project" value="TreeGrafter"/>
</dbReference>
<dbReference type="GO" id="GO:0006526">
    <property type="term" value="P:L-arginine biosynthetic process"/>
    <property type="evidence" value="ECO:0007669"/>
    <property type="project" value="UniProtKB-UniRule"/>
</dbReference>
<dbReference type="GO" id="GO:0000050">
    <property type="term" value="P:urea cycle"/>
    <property type="evidence" value="ECO:0007669"/>
    <property type="project" value="TreeGrafter"/>
</dbReference>
<dbReference type="CDD" id="cd01999">
    <property type="entry name" value="ASS"/>
    <property type="match status" value="1"/>
</dbReference>
<dbReference type="FunFam" id="1.10.287.400:FF:000001">
    <property type="entry name" value="Argininosuccinate synthase"/>
    <property type="match status" value="1"/>
</dbReference>
<dbReference type="Gene3D" id="1.10.287.400">
    <property type="match status" value="1"/>
</dbReference>
<dbReference type="Gene3D" id="3.90.1260.10">
    <property type="entry name" value="Argininosuccinate synthetase, chain A, domain 2"/>
    <property type="match status" value="1"/>
</dbReference>
<dbReference type="Gene3D" id="3.40.50.620">
    <property type="entry name" value="HUPs"/>
    <property type="match status" value="1"/>
</dbReference>
<dbReference type="HAMAP" id="MF_00581">
    <property type="entry name" value="Arg_succ_synth_type2"/>
    <property type="match status" value="1"/>
</dbReference>
<dbReference type="InterPro" id="IPR023437">
    <property type="entry name" value="Arg_succ_synth_type2_subfam"/>
</dbReference>
<dbReference type="InterPro" id="IPR048268">
    <property type="entry name" value="Arginosuc_syn_C"/>
</dbReference>
<dbReference type="InterPro" id="IPR048267">
    <property type="entry name" value="Arginosuc_syn_N"/>
</dbReference>
<dbReference type="InterPro" id="IPR001518">
    <property type="entry name" value="Arginosuc_synth"/>
</dbReference>
<dbReference type="InterPro" id="IPR018223">
    <property type="entry name" value="Arginosuc_synth_CS"/>
</dbReference>
<dbReference type="InterPro" id="IPR023434">
    <property type="entry name" value="Arginosuc_synth_type_1_subfam"/>
</dbReference>
<dbReference type="InterPro" id="IPR024074">
    <property type="entry name" value="AS_cat/multimer_dom_body"/>
</dbReference>
<dbReference type="InterPro" id="IPR024073">
    <property type="entry name" value="AS_multimer_C_tail"/>
</dbReference>
<dbReference type="InterPro" id="IPR014729">
    <property type="entry name" value="Rossmann-like_a/b/a_fold"/>
</dbReference>
<dbReference type="NCBIfam" id="TIGR00032">
    <property type="entry name" value="argG"/>
    <property type="match status" value="1"/>
</dbReference>
<dbReference type="NCBIfam" id="NF003779">
    <property type="entry name" value="PRK05370.1"/>
    <property type="match status" value="1"/>
</dbReference>
<dbReference type="PANTHER" id="PTHR11587">
    <property type="entry name" value="ARGININOSUCCINATE SYNTHASE"/>
    <property type="match status" value="1"/>
</dbReference>
<dbReference type="PANTHER" id="PTHR11587:SF2">
    <property type="entry name" value="ARGININOSUCCINATE SYNTHASE"/>
    <property type="match status" value="1"/>
</dbReference>
<dbReference type="Pfam" id="PF20979">
    <property type="entry name" value="Arginosuc_syn_C"/>
    <property type="match status" value="1"/>
</dbReference>
<dbReference type="Pfam" id="PF00764">
    <property type="entry name" value="Arginosuc_synth"/>
    <property type="match status" value="1"/>
</dbReference>
<dbReference type="SUPFAM" id="SSF52402">
    <property type="entry name" value="Adenine nucleotide alpha hydrolases-like"/>
    <property type="match status" value="1"/>
</dbReference>
<dbReference type="SUPFAM" id="SSF69864">
    <property type="entry name" value="Argininosuccinate synthetase, C-terminal domain"/>
    <property type="match status" value="1"/>
</dbReference>
<dbReference type="PROSITE" id="PS00564">
    <property type="entry name" value="ARGININOSUCCIN_SYN_1"/>
    <property type="match status" value="1"/>
</dbReference>
<dbReference type="PROSITE" id="PS00565">
    <property type="entry name" value="ARGININOSUCCIN_SYN_2"/>
    <property type="match status" value="1"/>
</dbReference>
<protein>
    <recommendedName>
        <fullName evidence="1">Argininosuccinate synthase</fullName>
        <ecNumber evidence="1">6.3.4.5</ecNumber>
    </recommendedName>
    <alternativeName>
        <fullName evidence="1">Citrulline--aspartate ligase</fullName>
    </alternativeName>
</protein>
<organism>
    <name type="scientific">Burkholderia mallei (strain ATCC 23344)</name>
    <dbReference type="NCBI Taxonomy" id="243160"/>
    <lineage>
        <taxon>Bacteria</taxon>
        <taxon>Pseudomonadati</taxon>
        <taxon>Pseudomonadota</taxon>
        <taxon>Betaproteobacteria</taxon>
        <taxon>Burkholderiales</taxon>
        <taxon>Burkholderiaceae</taxon>
        <taxon>Burkholderia</taxon>
        <taxon>pseudomallei group</taxon>
    </lineage>
</organism>
<keyword id="KW-0028">Amino-acid biosynthesis</keyword>
<keyword id="KW-0055">Arginine biosynthesis</keyword>
<keyword id="KW-0067">ATP-binding</keyword>
<keyword id="KW-0963">Cytoplasm</keyword>
<keyword id="KW-0436">Ligase</keyword>
<keyword id="KW-0547">Nucleotide-binding</keyword>
<keyword id="KW-1185">Reference proteome</keyword>
<gene>
    <name evidence="1" type="primary">argG</name>
    <name type="ordered locus">BMA3363</name>
</gene>
<name>ASSY_BURMA</name>
<reference key="1">
    <citation type="journal article" date="2004" name="Proc. Natl. Acad. Sci. U.S.A.">
        <title>Structural flexibility in the Burkholderia mallei genome.</title>
        <authorList>
            <person name="Nierman W.C."/>
            <person name="DeShazer D."/>
            <person name="Kim H.S."/>
            <person name="Tettelin H."/>
            <person name="Nelson K.E."/>
            <person name="Feldblyum T.V."/>
            <person name="Ulrich R.L."/>
            <person name="Ronning C.M."/>
            <person name="Brinkac L.M."/>
            <person name="Daugherty S.C."/>
            <person name="Davidsen T.D."/>
            <person name="DeBoy R.T."/>
            <person name="Dimitrov G."/>
            <person name="Dodson R.J."/>
            <person name="Durkin A.S."/>
            <person name="Gwinn M.L."/>
            <person name="Haft D.H."/>
            <person name="Khouri H.M."/>
            <person name="Kolonay J.F."/>
            <person name="Madupu R."/>
            <person name="Mohammoud Y."/>
            <person name="Nelson W.C."/>
            <person name="Radune D."/>
            <person name="Romero C.M."/>
            <person name="Sarria S."/>
            <person name="Selengut J."/>
            <person name="Shamblin C."/>
            <person name="Sullivan S.A."/>
            <person name="White O."/>
            <person name="Yu Y."/>
            <person name="Zafar N."/>
            <person name="Zhou L."/>
            <person name="Fraser C.M."/>
        </authorList>
    </citation>
    <scope>NUCLEOTIDE SEQUENCE [LARGE SCALE GENOMIC DNA]</scope>
    <source>
        <strain>ATCC 23344</strain>
    </source>
</reference>
<comment type="catalytic activity">
    <reaction evidence="1">
        <text>L-citrulline + L-aspartate + ATP = 2-(N(omega)-L-arginino)succinate + AMP + diphosphate + H(+)</text>
        <dbReference type="Rhea" id="RHEA:10932"/>
        <dbReference type="ChEBI" id="CHEBI:15378"/>
        <dbReference type="ChEBI" id="CHEBI:29991"/>
        <dbReference type="ChEBI" id="CHEBI:30616"/>
        <dbReference type="ChEBI" id="CHEBI:33019"/>
        <dbReference type="ChEBI" id="CHEBI:57472"/>
        <dbReference type="ChEBI" id="CHEBI:57743"/>
        <dbReference type="ChEBI" id="CHEBI:456215"/>
        <dbReference type="EC" id="6.3.4.5"/>
    </reaction>
</comment>
<comment type="pathway">
    <text evidence="1">Amino-acid biosynthesis; L-arginine biosynthesis; L-arginine from L-ornithine and carbamoyl phosphate: step 2/3.</text>
</comment>
<comment type="subunit">
    <text evidence="1">Homotetramer.</text>
</comment>
<comment type="subcellular location">
    <subcellularLocation>
        <location evidence="1">Cytoplasm</location>
    </subcellularLocation>
</comment>
<comment type="similarity">
    <text evidence="1">Belongs to the argininosuccinate synthase family. Type 2 subfamily.</text>
</comment>
<feature type="chain" id="PRO_1000025413" description="Argininosuccinate synthase">
    <location>
        <begin position="1"/>
        <end position="446"/>
    </location>
</feature>
<feature type="binding site" evidence="1">
    <location>
        <begin position="17"/>
        <end position="25"/>
    </location>
    <ligand>
        <name>ATP</name>
        <dbReference type="ChEBI" id="CHEBI:30616"/>
    </ligand>
</feature>
<feature type="binding site" evidence="1">
    <location>
        <position position="43"/>
    </location>
    <ligand>
        <name>ATP</name>
        <dbReference type="ChEBI" id="CHEBI:30616"/>
    </ligand>
</feature>
<feature type="binding site" evidence="1">
    <location>
        <position position="99"/>
    </location>
    <ligand>
        <name>L-citrulline</name>
        <dbReference type="ChEBI" id="CHEBI:57743"/>
    </ligand>
</feature>
<feature type="binding site" evidence="1">
    <location>
        <position position="129"/>
    </location>
    <ligand>
        <name>ATP</name>
        <dbReference type="ChEBI" id="CHEBI:30616"/>
    </ligand>
</feature>
<feature type="binding site" evidence="1">
    <location>
        <position position="131"/>
    </location>
    <ligand>
        <name>ATP</name>
        <dbReference type="ChEBI" id="CHEBI:30616"/>
    </ligand>
</feature>
<feature type="binding site" evidence="1">
    <location>
        <position position="131"/>
    </location>
    <ligand>
        <name>L-aspartate</name>
        <dbReference type="ChEBI" id="CHEBI:29991"/>
    </ligand>
</feature>
<feature type="binding site" evidence="1">
    <location>
        <position position="135"/>
    </location>
    <ligand>
        <name>L-aspartate</name>
        <dbReference type="ChEBI" id="CHEBI:29991"/>
    </ligand>
</feature>
<feature type="binding site" evidence="1">
    <location>
        <position position="135"/>
    </location>
    <ligand>
        <name>L-citrulline</name>
        <dbReference type="ChEBI" id="CHEBI:57743"/>
    </ligand>
</feature>
<feature type="binding site" evidence="1">
    <location>
        <position position="136"/>
    </location>
    <ligand>
        <name>ATP</name>
        <dbReference type="ChEBI" id="CHEBI:30616"/>
    </ligand>
</feature>
<feature type="binding site" evidence="1">
    <location>
        <position position="136"/>
    </location>
    <ligand>
        <name>L-aspartate</name>
        <dbReference type="ChEBI" id="CHEBI:29991"/>
    </ligand>
</feature>
<feature type="binding site" evidence="1">
    <location>
        <position position="139"/>
    </location>
    <ligand>
        <name>L-citrulline</name>
        <dbReference type="ChEBI" id="CHEBI:57743"/>
    </ligand>
</feature>
<feature type="binding site" evidence="1">
    <location>
        <position position="192"/>
    </location>
    <ligand>
        <name>L-citrulline</name>
        <dbReference type="ChEBI" id="CHEBI:57743"/>
    </ligand>
</feature>
<feature type="binding site" evidence="1">
    <location>
        <position position="194"/>
    </location>
    <ligand>
        <name>ATP</name>
        <dbReference type="ChEBI" id="CHEBI:30616"/>
    </ligand>
</feature>
<feature type="binding site" evidence="1">
    <location>
        <position position="201"/>
    </location>
    <ligand>
        <name>L-citrulline</name>
        <dbReference type="ChEBI" id="CHEBI:57743"/>
    </ligand>
</feature>
<feature type="binding site" evidence="1">
    <location>
        <position position="203"/>
    </location>
    <ligand>
        <name>L-citrulline</name>
        <dbReference type="ChEBI" id="CHEBI:57743"/>
    </ligand>
</feature>
<feature type="binding site" evidence="1">
    <location>
        <position position="280"/>
    </location>
    <ligand>
        <name>L-citrulline</name>
        <dbReference type="ChEBI" id="CHEBI:57743"/>
    </ligand>
</feature>